<comment type="similarity">
    <text evidence="2">Belongs to the IIV-6 302L family.</text>
</comment>
<dbReference type="EMBL" id="DQ643392">
    <property type="protein sequence ID" value="ABF82042.1"/>
    <property type="molecule type" value="Genomic_DNA"/>
</dbReference>
<dbReference type="RefSeq" id="YP_654584.1">
    <property type="nucleotide sequence ID" value="NC_008187.1"/>
</dbReference>
<dbReference type="KEGG" id="vg:4156261"/>
<dbReference type="OrthoDB" id="11188at10239"/>
<dbReference type="Proteomes" id="UP000001358">
    <property type="component" value="Genome"/>
</dbReference>
<dbReference type="GO" id="GO:0008270">
    <property type="term" value="F:zinc ion binding"/>
    <property type="evidence" value="ECO:0007669"/>
    <property type="project" value="UniProtKB-KW"/>
</dbReference>
<dbReference type="InterPro" id="IPR013087">
    <property type="entry name" value="Znf_C2H2_type"/>
</dbReference>
<dbReference type="PROSITE" id="PS50157">
    <property type="entry name" value="ZINC_FINGER_C2H2_2"/>
    <property type="match status" value="1"/>
</dbReference>
<feature type="chain" id="PRO_0000377780" description="Putative zinc finger protein 012R">
    <location>
        <begin position="1"/>
        <end position="373"/>
    </location>
</feature>
<feature type="zinc finger region" description="C2H2-type" evidence="1">
    <location>
        <begin position="2"/>
        <end position="29"/>
    </location>
</feature>
<reference key="1">
    <citation type="journal article" date="2006" name="J. Virol.">
        <title>Genome of invertebrate iridescent virus type 3 (mosquito iridescent virus).</title>
        <authorList>
            <person name="Delhon G."/>
            <person name="Tulman E.R."/>
            <person name="Afonso C.L."/>
            <person name="Lu Z."/>
            <person name="Becnel J.J."/>
            <person name="Moser B.A."/>
            <person name="Kutish G.F."/>
            <person name="Rock D.L."/>
        </authorList>
    </citation>
    <scope>NUCLEOTIDE SEQUENCE [LARGE SCALE GENOMIC DNA]</scope>
</reference>
<keyword id="KW-0479">Metal-binding</keyword>
<keyword id="KW-1185">Reference proteome</keyword>
<keyword id="KW-0862">Zinc</keyword>
<keyword id="KW-0863">Zinc-finger</keyword>
<accession>Q197E8</accession>
<protein>
    <recommendedName>
        <fullName>Putative zinc finger protein 012R</fullName>
    </recommendedName>
</protein>
<evidence type="ECO:0000255" key="1">
    <source>
        <dbReference type="PROSITE-ProRule" id="PRU00042"/>
    </source>
</evidence>
<evidence type="ECO:0000305" key="2"/>
<organism>
    <name type="scientific">Invertebrate iridescent virus 3</name>
    <name type="common">IIV-3</name>
    <name type="synonym">Mosquito iridescent virus</name>
    <dbReference type="NCBI Taxonomy" id="345201"/>
    <lineage>
        <taxon>Viruses</taxon>
        <taxon>Varidnaviria</taxon>
        <taxon>Bamfordvirae</taxon>
        <taxon>Nucleocytoviricota</taxon>
        <taxon>Megaviricetes</taxon>
        <taxon>Pimascovirales</taxon>
        <taxon>Iridoviridae</taxon>
        <taxon>Betairidovirinae</taxon>
        <taxon>Chloriridovirus</taxon>
    </lineage>
</organism>
<name>VF302_IIV3</name>
<gene>
    <name type="ORF">IIV3-012R</name>
</gene>
<proteinExistence type="inferred from homology"/>
<sequence length="373" mass="44074">MFECTHCDLHFESKSKLATHQKTKKCTAHRFLGFTCQKCWDHVKGYENALNHVAKCGQKLQTFEGIQALVAQLALHYKCEVVFDHENGKGQINFQKVFNYTHPSNLQEMREPIEPRSMHVWYKMLRKYSDQYLLGGHGLYLNDINYTLFRLSDAFKFLAAKYDARTLLKMLWIEPTYKLFHVKDGIVYVLGKIQSQTQEGRKWFGDTFCLQRNETIVKCLWYRDPTLEQLWSNTIPLLKEILNLYLDLGTWLLKRKNIKLKNDHKIHHNCKTIIENVFKEYDVTNLIENITVLNSRQTFTTMFREILTQHQKDLRLPSNIHHVFKDDLLPSSLGGQEFSLMTMTEQKISGGNQYHLMYHILPESERPMFETKI</sequence>
<organismHost>
    <name type="scientific">Aedes vexans</name>
    <name type="common">Inland floodwater mosquito</name>
    <name type="synonym">Culex vexans</name>
    <dbReference type="NCBI Taxonomy" id="7163"/>
</organismHost>
<organismHost>
    <name type="scientific">Culex territans</name>
    <dbReference type="NCBI Taxonomy" id="42431"/>
</organismHost>
<organismHost>
    <name type="scientific">Culiseta annulata</name>
    <dbReference type="NCBI Taxonomy" id="332058"/>
</organismHost>
<organismHost>
    <name type="scientific">Ochlerotatus sollicitans</name>
    <name type="common">eastern saltmarsh mosquito</name>
    <dbReference type="NCBI Taxonomy" id="310513"/>
</organismHost>
<organismHost>
    <name type="scientific">Ochlerotatus taeniorhynchus</name>
    <name type="common">Black salt marsh mosquito</name>
    <name type="synonym">Aedes taeniorhynchus</name>
    <dbReference type="NCBI Taxonomy" id="329105"/>
</organismHost>
<organismHost>
    <name type="scientific">Psorophora ferox</name>
    <dbReference type="NCBI Taxonomy" id="7183"/>
</organismHost>